<reference key="1">
    <citation type="journal article" date="2002" name="Nucleic Acids Res.">
        <title>The complete genomic sequence of Mycoplasma penetrans, an intracellular bacterial pathogen in humans.</title>
        <authorList>
            <person name="Sasaki Y."/>
            <person name="Ishikawa J."/>
            <person name="Yamashita A."/>
            <person name="Oshima K."/>
            <person name="Kenri T."/>
            <person name="Furuya K."/>
            <person name="Yoshino C."/>
            <person name="Horino A."/>
            <person name="Shiba T."/>
            <person name="Sasaki T."/>
            <person name="Hattori M."/>
        </authorList>
    </citation>
    <scope>NUCLEOTIDE SEQUENCE [LARGE SCALE GENOMIC DNA]</scope>
    <source>
        <strain>HF-2</strain>
    </source>
</reference>
<name>TPIS_MALP2</name>
<proteinExistence type="inferred from homology"/>
<protein>
    <recommendedName>
        <fullName evidence="1">Triosephosphate isomerase</fullName>
        <shortName evidence="1">TIM</shortName>
        <shortName evidence="1">TPI</shortName>
        <ecNumber evidence="1">5.3.1.1</ecNumber>
    </recommendedName>
    <alternativeName>
        <fullName evidence="1">Triose-phosphate isomerase</fullName>
    </alternativeName>
</protein>
<dbReference type="EC" id="5.3.1.1" evidence="1"/>
<dbReference type="EMBL" id="BA000026">
    <property type="protein sequence ID" value="BAC44162.1"/>
    <property type="molecule type" value="Genomic_DNA"/>
</dbReference>
<dbReference type="RefSeq" id="WP_011077198.1">
    <property type="nucleotide sequence ID" value="NC_004432.1"/>
</dbReference>
<dbReference type="SMR" id="Q8EW34"/>
<dbReference type="FunCoup" id="Q8EW34">
    <property type="interactions" value="226"/>
</dbReference>
<dbReference type="STRING" id="272633.gene:10731488"/>
<dbReference type="KEGG" id="mpe:MYPE3730"/>
<dbReference type="eggNOG" id="COG0149">
    <property type="taxonomic scope" value="Bacteria"/>
</dbReference>
<dbReference type="HOGENOM" id="CLU_024251_2_3_14"/>
<dbReference type="InParanoid" id="Q8EW34"/>
<dbReference type="UniPathway" id="UPA00109">
    <property type="reaction ID" value="UER00189"/>
</dbReference>
<dbReference type="UniPathway" id="UPA00138"/>
<dbReference type="Proteomes" id="UP000002522">
    <property type="component" value="Chromosome"/>
</dbReference>
<dbReference type="GO" id="GO:0005829">
    <property type="term" value="C:cytosol"/>
    <property type="evidence" value="ECO:0007669"/>
    <property type="project" value="TreeGrafter"/>
</dbReference>
<dbReference type="GO" id="GO:0004807">
    <property type="term" value="F:triose-phosphate isomerase activity"/>
    <property type="evidence" value="ECO:0007669"/>
    <property type="project" value="UniProtKB-UniRule"/>
</dbReference>
<dbReference type="GO" id="GO:0006094">
    <property type="term" value="P:gluconeogenesis"/>
    <property type="evidence" value="ECO:0007669"/>
    <property type="project" value="UniProtKB-UniRule"/>
</dbReference>
<dbReference type="GO" id="GO:0046166">
    <property type="term" value="P:glyceraldehyde-3-phosphate biosynthetic process"/>
    <property type="evidence" value="ECO:0007669"/>
    <property type="project" value="TreeGrafter"/>
</dbReference>
<dbReference type="GO" id="GO:0019563">
    <property type="term" value="P:glycerol catabolic process"/>
    <property type="evidence" value="ECO:0007669"/>
    <property type="project" value="TreeGrafter"/>
</dbReference>
<dbReference type="GO" id="GO:0006096">
    <property type="term" value="P:glycolytic process"/>
    <property type="evidence" value="ECO:0007669"/>
    <property type="project" value="UniProtKB-UniRule"/>
</dbReference>
<dbReference type="CDD" id="cd00311">
    <property type="entry name" value="TIM"/>
    <property type="match status" value="1"/>
</dbReference>
<dbReference type="FunFam" id="3.20.20.70:FF:000016">
    <property type="entry name" value="Triosephosphate isomerase"/>
    <property type="match status" value="1"/>
</dbReference>
<dbReference type="Gene3D" id="3.20.20.70">
    <property type="entry name" value="Aldolase class I"/>
    <property type="match status" value="1"/>
</dbReference>
<dbReference type="HAMAP" id="MF_00147_B">
    <property type="entry name" value="TIM_B"/>
    <property type="match status" value="1"/>
</dbReference>
<dbReference type="InterPro" id="IPR013785">
    <property type="entry name" value="Aldolase_TIM"/>
</dbReference>
<dbReference type="InterPro" id="IPR035990">
    <property type="entry name" value="TIM_sf"/>
</dbReference>
<dbReference type="InterPro" id="IPR022896">
    <property type="entry name" value="TrioseP_Isoase_bac/euk"/>
</dbReference>
<dbReference type="InterPro" id="IPR000652">
    <property type="entry name" value="Triosephosphate_isomerase"/>
</dbReference>
<dbReference type="InterPro" id="IPR020861">
    <property type="entry name" value="Triosephosphate_isomerase_AS"/>
</dbReference>
<dbReference type="NCBIfam" id="TIGR00419">
    <property type="entry name" value="tim"/>
    <property type="match status" value="1"/>
</dbReference>
<dbReference type="PANTHER" id="PTHR21139">
    <property type="entry name" value="TRIOSEPHOSPHATE ISOMERASE"/>
    <property type="match status" value="1"/>
</dbReference>
<dbReference type="PANTHER" id="PTHR21139:SF42">
    <property type="entry name" value="TRIOSEPHOSPHATE ISOMERASE"/>
    <property type="match status" value="1"/>
</dbReference>
<dbReference type="Pfam" id="PF00121">
    <property type="entry name" value="TIM"/>
    <property type="match status" value="1"/>
</dbReference>
<dbReference type="SUPFAM" id="SSF51351">
    <property type="entry name" value="Triosephosphate isomerase (TIM)"/>
    <property type="match status" value="1"/>
</dbReference>
<dbReference type="PROSITE" id="PS00171">
    <property type="entry name" value="TIM_1"/>
    <property type="match status" value="1"/>
</dbReference>
<dbReference type="PROSITE" id="PS51440">
    <property type="entry name" value="TIM_2"/>
    <property type="match status" value="1"/>
</dbReference>
<feature type="chain" id="PRO_0000090252" description="Triosephosphate isomerase">
    <location>
        <begin position="1"/>
        <end position="250"/>
    </location>
</feature>
<feature type="active site" description="Electrophile" evidence="1">
    <location>
        <position position="93"/>
    </location>
</feature>
<feature type="active site" description="Proton acceptor" evidence="1">
    <location>
        <position position="165"/>
    </location>
</feature>
<feature type="binding site" evidence="1">
    <location>
        <begin position="8"/>
        <end position="10"/>
    </location>
    <ligand>
        <name>substrate</name>
    </ligand>
</feature>
<feature type="binding site" evidence="1">
    <location>
        <position position="171"/>
    </location>
    <ligand>
        <name>substrate</name>
    </ligand>
</feature>
<feature type="binding site" evidence="1">
    <location>
        <position position="211"/>
    </location>
    <ligand>
        <name>substrate</name>
    </ligand>
</feature>
<comment type="function">
    <text evidence="1">Involved in the gluconeogenesis. Catalyzes stereospecifically the conversion of dihydroxyacetone phosphate (DHAP) to D-glyceraldehyde-3-phosphate (G3P).</text>
</comment>
<comment type="catalytic activity">
    <reaction evidence="1">
        <text>D-glyceraldehyde 3-phosphate = dihydroxyacetone phosphate</text>
        <dbReference type="Rhea" id="RHEA:18585"/>
        <dbReference type="ChEBI" id="CHEBI:57642"/>
        <dbReference type="ChEBI" id="CHEBI:59776"/>
        <dbReference type="EC" id="5.3.1.1"/>
    </reaction>
</comment>
<comment type="pathway">
    <text evidence="1">Carbohydrate biosynthesis; gluconeogenesis.</text>
</comment>
<comment type="pathway">
    <text evidence="1">Carbohydrate degradation; glycolysis; D-glyceraldehyde 3-phosphate from glycerone phosphate: step 1/1.</text>
</comment>
<comment type="subunit">
    <text evidence="1">Homodimer.</text>
</comment>
<comment type="subcellular location">
    <subcellularLocation>
        <location evidence="1">Cytoplasm</location>
    </subcellularLocation>
</comment>
<comment type="similarity">
    <text evidence="1">Belongs to the triosephosphate isomerase family.</text>
</comment>
<accession>Q8EW34</accession>
<keyword id="KW-0963">Cytoplasm</keyword>
<keyword id="KW-0312">Gluconeogenesis</keyword>
<keyword id="KW-0324">Glycolysis</keyword>
<keyword id="KW-0413">Isomerase</keyword>
<keyword id="KW-1185">Reference proteome</keyword>
<gene>
    <name evidence="1" type="primary">tpiA</name>
    <name type="ordered locus">MYPE3730</name>
</gene>
<organism>
    <name type="scientific">Malacoplasma penetrans (strain HF-2)</name>
    <name type="common">Mycoplasma penetrans</name>
    <dbReference type="NCBI Taxonomy" id="272633"/>
    <lineage>
        <taxon>Bacteria</taxon>
        <taxon>Bacillati</taxon>
        <taxon>Mycoplasmatota</taxon>
        <taxon>Mycoplasmoidales</taxon>
        <taxon>Mycoplasmoidaceae</taxon>
        <taxon>Malacoplasma</taxon>
    </lineage>
</organism>
<evidence type="ECO:0000255" key="1">
    <source>
        <dbReference type="HAMAP-Rule" id="MF_00147"/>
    </source>
</evidence>
<sequence>MKKLIIANWKMFKTLNDIKTFKEEFDKNIKNVKVNADYSVGVPSIYLNQAKEILKGIKVIAQDAHFKNEGAYTGNISWSQLKDCGIDGSIIGHSERRQMFNETDETVNLKTISLVENNMQAVVCVGETLEEYEANKSFDVVWNQTKKALANVSEAQLKNVVIAYEPVWAIGTGKVPTGKEVDDLIQKVRDELSKLYSKQAVESLVVLYGGSVNDKNAEEFFKQKNINGALVGSFCLKAENFVKLIELGGN</sequence>